<accession>Q8BXA6</accession>
<organism>
    <name type="scientific">Mus musculus</name>
    <name type="common">Mouse</name>
    <dbReference type="NCBI Taxonomy" id="10090"/>
    <lineage>
        <taxon>Eukaryota</taxon>
        <taxon>Metazoa</taxon>
        <taxon>Chordata</taxon>
        <taxon>Craniata</taxon>
        <taxon>Vertebrata</taxon>
        <taxon>Euteleostomi</taxon>
        <taxon>Mammalia</taxon>
        <taxon>Eutheria</taxon>
        <taxon>Euarchontoglires</taxon>
        <taxon>Glires</taxon>
        <taxon>Rodentia</taxon>
        <taxon>Myomorpha</taxon>
        <taxon>Muroidea</taxon>
        <taxon>Muridae</taxon>
        <taxon>Murinae</taxon>
        <taxon>Mus</taxon>
        <taxon>Mus</taxon>
    </lineage>
</organism>
<evidence type="ECO:0000250" key="1">
    <source>
        <dbReference type="UniProtKB" id="P56750"/>
    </source>
</evidence>
<evidence type="ECO:0000255" key="2"/>
<evidence type="ECO:0000269" key="3">
    <source>
    </source>
</evidence>
<evidence type="ECO:0000305" key="4"/>
<keyword id="KW-0965">Cell junction</keyword>
<keyword id="KW-1003">Cell membrane</keyword>
<keyword id="KW-0868">Chloride</keyword>
<keyword id="KW-0869">Chloride channel</keyword>
<keyword id="KW-0407">Ion channel</keyword>
<keyword id="KW-0406">Ion transport</keyword>
<keyword id="KW-0472">Membrane</keyword>
<keyword id="KW-1185">Reference proteome</keyword>
<keyword id="KW-0796">Tight junction</keyword>
<keyword id="KW-0812">Transmembrane</keyword>
<keyword id="KW-1133">Transmembrane helix</keyword>
<keyword id="KW-0813">Transport</keyword>
<name>CLD17_MOUSE</name>
<feature type="chain" id="PRO_0000144778" description="Claudin-17">
    <location>
        <begin position="1"/>
        <end position="224"/>
    </location>
</feature>
<feature type="topological domain" description="Cytoplasmic" evidence="2">
    <location>
        <begin position="1"/>
        <end position="7"/>
    </location>
</feature>
<feature type="transmembrane region" description="Helical" evidence="2">
    <location>
        <begin position="8"/>
        <end position="28"/>
    </location>
</feature>
<feature type="topological domain" description="Extracellular" evidence="2">
    <location>
        <begin position="29"/>
        <end position="81"/>
    </location>
</feature>
<feature type="transmembrane region" description="Helical" evidence="2">
    <location>
        <begin position="82"/>
        <end position="102"/>
    </location>
</feature>
<feature type="topological domain" description="Cytoplasmic" evidence="2">
    <location>
        <begin position="103"/>
        <end position="124"/>
    </location>
</feature>
<feature type="transmembrane region" description="Helical" evidence="2">
    <location>
        <begin position="125"/>
        <end position="145"/>
    </location>
</feature>
<feature type="topological domain" description="Extracellular" evidence="2">
    <location>
        <begin position="146"/>
        <end position="164"/>
    </location>
</feature>
<feature type="transmembrane region" description="Helical" evidence="2">
    <location>
        <begin position="165"/>
        <end position="185"/>
    </location>
</feature>
<feature type="topological domain" description="Cytoplasmic" evidence="2">
    <location>
        <begin position="186"/>
        <end position="224"/>
    </location>
</feature>
<gene>
    <name type="primary">Cldn17</name>
</gene>
<comment type="function">
    <text evidence="1">Channel-forming tight junction protein with selectivity for anions, including chloride and hydrogencarbonate, and for solutes smaller than 9 Angstrom in diameter. In the kidney proximal tubule, may be involved in quantitative reabsorption of filtered anions. Does not affect water permeability.</text>
</comment>
<comment type="catalytic activity">
    <reaction evidence="1">
        <text>chloride(in) = chloride(out)</text>
        <dbReference type="Rhea" id="RHEA:29823"/>
        <dbReference type="ChEBI" id="CHEBI:17996"/>
    </reaction>
</comment>
<comment type="catalytic activity">
    <reaction evidence="1">
        <text>hydrogencarbonate(in) = hydrogencarbonate(out)</text>
        <dbReference type="Rhea" id="RHEA:28695"/>
        <dbReference type="ChEBI" id="CHEBI:17544"/>
    </reaction>
</comment>
<comment type="catalytic activity">
    <reaction evidence="1">
        <text>bromide(in) = bromide(out)</text>
        <dbReference type="Rhea" id="RHEA:75383"/>
        <dbReference type="ChEBI" id="CHEBI:15858"/>
    </reaction>
</comment>
<comment type="catalytic activity">
    <reaction evidence="1">
        <text>iodide(out) = iodide(in)</text>
        <dbReference type="Rhea" id="RHEA:66324"/>
        <dbReference type="ChEBI" id="CHEBI:16382"/>
    </reaction>
</comment>
<comment type="catalytic activity">
    <reaction evidence="1">
        <text>fluoride(in) = fluoride(out)</text>
        <dbReference type="Rhea" id="RHEA:76159"/>
        <dbReference type="ChEBI" id="CHEBI:17051"/>
    </reaction>
</comment>
<comment type="catalytic activity">
    <reaction evidence="1">
        <text>nitrate(in) = nitrate(out)</text>
        <dbReference type="Rhea" id="RHEA:34923"/>
        <dbReference type="ChEBI" id="CHEBI:17632"/>
    </reaction>
</comment>
<comment type="catalytic activity">
    <reaction evidence="1">
        <text>thiocyanate(in) = thiocyanate(out)</text>
        <dbReference type="Rhea" id="RHEA:75347"/>
        <dbReference type="ChEBI" id="CHEBI:18022"/>
    </reaction>
</comment>
<comment type="subunit">
    <text evidence="1">Does not form homotypic polymeric strands and it is not sufficient to form tight junctions by its own. Interacts with OCLN.</text>
</comment>
<comment type="subcellular location">
    <subcellularLocation>
        <location evidence="3">Cell junction</location>
        <location evidence="3">Tight junction</location>
    </subcellularLocation>
    <subcellularLocation>
        <location evidence="4">Cell membrane</location>
        <topology evidence="2">Multi-pass membrane protein</topology>
    </subcellularLocation>
</comment>
<comment type="tissue specificity">
    <text evidence="3">Expressed at high levels in the kidney and at mucher lower levels in the brain. In the kidney, expression gradually decreases from the proximal tubule downstream to the distal convoluted tubule. Expressed in the thin ascending limb of Henle's loop, as well as in the thick ascending limb of Henle's loop. In the distal convoluted tubules, expressed only in a few tubules. Not detected in the collecting duct. In the brain, expressed in blood vessels (at protein level).</text>
</comment>
<comment type="similarity">
    <text evidence="4">Belongs to the claudin family.</text>
</comment>
<sequence length="224" mass="24653">MAFYPLQIAGLVLGFFGLVGTIGTTLLPQWRVSAFIGSNIIIFERIWEGLWMNCIQQAMVTLQCKFYNSILALPPVLEAARALMCVAVALALVALIIGICGMKQLQCTGSSERVKAYLLGTSGVLFILTGIFVLIPVSWTANIIIRDFYDPTVHAGQKRELGGALFLGWATAAVLFIGGGLLCGYCCCNRKERWHRYPVPAYRVPQKDNQRNVTVPRKSSTSYV</sequence>
<proteinExistence type="evidence at protein level"/>
<reference key="1">
    <citation type="journal article" date="2005" name="Science">
        <title>The transcriptional landscape of the mammalian genome.</title>
        <authorList>
            <person name="Carninci P."/>
            <person name="Kasukawa T."/>
            <person name="Katayama S."/>
            <person name="Gough J."/>
            <person name="Frith M.C."/>
            <person name="Maeda N."/>
            <person name="Oyama R."/>
            <person name="Ravasi T."/>
            <person name="Lenhard B."/>
            <person name="Wells C."/>
            <person name="Kodzius R."/>
            <person name="Shimokawa K."/>
            <person name="Bajic V.B."/>
            <person name="Brenner S.E."/>
            <person name="Batalov S."/>
            <person name="Forrest A.R."/>
            <person name="Zavolan M."/>
            <person name="Davis M.J."/>
            <person name="Wilming L.G."/>
            <person name="Aidinis V."/>
            <person name="Allen J.E."/>
            <person name="Ambesi-Impiombato A."/>
            <person name="Apweiler R."/>
            <person name="Aturaliya R.N."/>
            <person name="Bailey T.L."/>
            <person name="Bansal M."/>
            <person name="Baxter L."/>
            <person name="Beisel K.W."/>
            <person name="Bersano T."/>
            <person name="Bono H."/>
            <person name="Chalk A.M."/>
            <person name="Chiu K.P."/>
            <person name="Choudhary V."/>
            <person name="Christoffels A."/>
            <person name="Clutterbuck D.R."/>
            <person name="Crowe M.L."/>
            <person name="Dalla E."/>
            <person name="Dalrymple B.P."/>
            <person name="de Bono B."/>
            <person name="Della Gatta G."/>
            <person name="di Bernardo D."/>
            <person name="Down T."/>
            <person name="Engstrom P."/>
            <person name="Fagiolini M."/>
            <person name="Faulkner G."/>
            <person name="Fletcher C.F."/>
            <person name="Fukushima T."/>
            <person name="Furuno M."/>
            <person name="Futaki S."/>
            <person name="Gariboldi M."/>
            <person name="Georgii-Hemming P."/>
            <person name="Gingeras T.R."/>
            <person name="Gojobori T."/>
            <person name="Green R.E."/>
            <person name="Gustincich S."/>
            <person name="Harbers M."/>
            <person name="Hayashi Y."/>
            <person name="Hensch T.K."/>
            <person name="Hirokawa N."/>
            <person name="Hill D."/>
            <person name="Huminiecki L."/>
            <person name="Iacono M."/>
            <person name="Ikeo K."/>
            <person name="Iwama A."/>
            <person name="Ishikawa T."/>
            <person name="Jakt M."/>
            <person name="Kanapin A."/>
            <person name="Katoh M."/>
            <person name="Kawasawa Y."/>
            <person name="Kelso J."/>
            <person name="Kitamura H."/>
            <person name="Kitano H."/>
            <person name="Kollias G."/>
            <person name="Krishnan S.P."/>
            <person name="Kruger A."/>
            <person name="Kummerfeld S.K."/>
            <person name="Kurochkin I.V."/>
            <person name="Lareau L.F."/>
            <person name="Lazarevic D."/>
            <person name="Lipovich L."/>
            <person name="Liu J."/>
            <person name="Liuni S."/>
            <person name="McWilliam S."/>
            <person name="Madan Babu M."/>
            <person name="Madera M."/>
            <person name="Marchionni L."/>
            <person name="Matsuda H."/>
            <person name="Matsuzawa S."/>
            <person name="Miki H."/>
            <person name="Mignone F."/>
            <person name="Miyake S."/>
            <person name="Morris K."/>
            <person name="Mottagui-Tabar S."/>
            <person name="Mulder N."/>
            <person name="Nakano N."/>
            <person name="Nakauchi H."/>
            <person name="Ng P."/>
            <person name="Nilsson R."/>
            <person name="Nishiguchi S."/>
            <person name="Nishikawa S."/>
            <person name="Nori F."/>
            <person name="Ohara O."/>
            <person name="Okazaki Y."/>
            <person name="Orlando V."/>
            <person name="Pang K.C."/>
            <person name="Pavan W.J."/>
            <person name="Pavesi G."/>
            <person name="Pesole G."/>
            <person name="Petrovsky N."/>
            <person name="Piazza S."/>
            <person name="Reed J."/>
            <person name="Reid J.F."/>
            <person name="Ring B.Z."/>
            <person name="Ringwald M."/>
            <person name="Rost B."/>
            <person name="Ruan Y."/>
            <person name="Salzberg S.L."/>
            <person name="Sandelin A."/>
            <person name="Schneider C."/>
            <person name="Schoenbach C."/>
            <person name="Sekiguchi K."/>
            <person name="Semple C.A."/>
            <person name="Seno S."/>
            <person name="Sessa L."/>
            <person name="Sheng Y."/>
            <person name="Shibata Y."/>
            <person name="Shimada H."/>
            <person name="Shimada K."/>
            <person name="Silva D."/>
            <person name="Sinclair B."/>
            <person name="Sperling S."/>
            <person name="Stupka E."/>
            <person name="Sugiura K."/>
            <person name="Sultana R."/>
            <person name="Takenaka Y."/>
            <person name="Taki K."/>
            <person name="Tammoja K."/>
            <person name="Tan S.L."/>
            <person name="Tang S."/>
            <person name="Taylor M.S."/>
            <person name="Tegner J."/>
            <person name="Teichmann S.A."/>
            <person name="Ueda H.R."/>
            <person name="van Nimwegen E."/>
            <person name="Verardo R."/>
            <person name="Wei C.L."/>
            <person name="Yagi K."/>
            <person name="Yamanishi H."/>
            <person name="Zabarovsky E."/>
            <person name="Zhu S."/>
            <person name="Zimmer A."/>
            <person name="Hide W."/>
            <person name="Bult C."/>
            <person name="Grimmond S.M."/>
            <person name="Teasdale R.D."/>
            <person name="Liu E.T."/>
            <person name="Brusic V."/>
            <person name="Quackenbush J."/>
            <person name="Wahlestedt C."/>
            <person name="Mattick J.S."/>
            <person name="Hume D.A."/>
            <person name="Kai C."/>
            <person name="Sasaki D."/>
            <person name="Tomaru Y."/>
            <person name="Fukuda S."/>
            <person name="Kanamori-Katayama M."/>
            <person name="Suzuki M."/>
            <person name="Aoki J."/>
            <person name="Arakawa T."/>
            <person name="Iida J."/>
            <person name="Imamura K."/>
            <person name="Itoh M."/>
            <person name="Kato T."/>
            <person name="Kawaji H."/>
            <person name="Kawagashira N."/>
            <person name="Kawashima T."/>
            <person name="Kojima M."/>
            <person name="Kondo S."/>
            <person name="Konno H."/>
            <person name="Nakano K."/>
            <person name="Ninomiya N."/>
            <person name="Nishio T."/>
            <person name="Okada M."/>
            <person name="Plessy C."/>
            <person name="Shibata K."/>
            <person name="Shiraki T."/>
            <person name="Suzuki S."/>
            <person name="Tagami M."/>
            <person name="Waki K."/>
            <person name="Watahiki A."/>
            <person name="Okamura-Oho Y."/>
            <person name="Suzuki H."/>
            <person name="Kawai J."/>
            <person name="Hayashizaki Y."/>
        </authorList>
    </citation>
    <scope>NUCLEOTIDE SEQUENCE [LARGE SCALE MRNA]</scope>
    <source>
        <strain>C57BL/6J</strain>
        <tissue>Head</tissue>
    </source>
</reference>
<reference key="2">
    <citation type="journal article" date="2012" name="Cell. Mol. Life Sci.">
        <title>Claudin-17 forms tight junction channels with distinct anion selectivity.</title>
        <authorList>
            <person name="Krug S.M."/>
            <person name="Guenzel D."/>
            <person name="Conrad M.P."/>
            <person name="Rosenthal R."/>
            <person name="Fromm A."/>
            <person name="Amasheh S."/>
            <person name="Schulzke J.D."/>
            <person name="Fromm M."/>
        </authorList>
    </citation>
    <scope>SUBCELLULAR LOCATION</scope>
    <scope>TISSUE SPECIFICITY</scope>
</reference>
<protein>
    <recommendedName>
        <fullName>Claudin-17</fullName>
    </recommendedName>
</protein>
<dbReference type="EMBL" id="AK048287">
    <property type="protein sequence ID" value="BAC33296.1"/>
    <property type="molecule type" value="mRNA"/>
</dbReference>
<dbReference type="CCDS" id="CCDS28295.1"/>
<dbReference type="RefSeq" id="NP_852467.1">
    <property type="nucleotide sequence ID" value="NM_181490.3"/>
</dbReference>
<dbReference type="SMR" id="Q8BXA6"/>
<dbReference type="FunCoup" id="Q8BXA6">
    <property type="interactions" value="251"/>
</dbReference>
<dbReference type="STRING" id="10090.ENSMUSP00000066427"/>
<dbReference type="PhosphoSitePlus" id="Q8BXA6"/>
<dbReference type="PaxDb" id="10090-ENSMUSP00000066427"/>
<dbReference type="ProteomicsDB" id="283291"/>
<dbReference type="Antibodypedia" id="6585">
    <property type="antibodies" value="120 antibodies from 24 providers"/>
</dbReference>
<dbReference type="DNASU" id="239931"/>
<dbReference type="Ensembl" id="ENSMUST00000069549.3">
    <property type="protein sequence ID" value="ENSMUSP00000066427.3"/>
    <property type="gene ID" value="ENSMUSG00000055811.3"/>
</dbReference>
<dbReference type="GeneID" id="239931"/>
<dbReference type="KEGG" id="mmu:239931"/>
<dbReference type="UCSC" id="uc007zuy.1">
    <property type="organism name" value="mouse"/>
</dbReference>
<dbReference type="AGR" id="MGI:2652030"/>
<dbReference type="CTD" id="26285"/>
<dbReference type="MGI" id="MGI:2652030">
    <property type="gene designation" value="Cldn17"/>
</dbReference>
<dbReference type="VEuPathDB" id="HostDB:ENSMUSG00000055811"/>
<dbReference type="eggNOG" id="ENOG502RTNJ">
    <property type="taxonomic scope" value="Eukaryota"/>
</dbReference>
<dbReference type="GeneTree" id="ENSGT00940000162550"/>
<dbReference type="HOGENOM" id="CLU_076370_1_2_1"/>
<dbReference type="InParanoid" id="Q8BXA6"/>
<dbReference type="OMA" id="VCWTANI"/>
<dbReference type="OrthoDB" id="8819159at2759"/>
<dbReference type="PhylomeDB" id="Q8BXA6"/>
<dbReference type="TreeFam" id="TF331936"/>
<dbReference type="BioGRID-ORCS" id="239931">
    <property type="hits" value="3 hits in 76 CRISPR screens"/>
</dbReference>
<dbReference type="PRO" id="PR:Q8BXA6"/>
<dbReference type="Proteomes" id="UP000000589">
    <property type="component" value="Chromosome 16"/>
</dbReference>
<dbReference type="RNAct" id="Q8BXA6">
    <property type="molecule type" value="protein"/>
</dbReference>
<dbReference type="Bgee" id="ENSMUSG00000055811">
    <property type="expression patterns" value="Expressed in esophagus and 14 other cell types or tissues"/>
</dbReference>
<dbReference type="GO" id="GO:0005923">
    <property type="term" value="C:bicellular tight junction"/>
    <property type="evidence" value="ECO:0000250"/>
    <property type="project" value="UniProtKB"/>
</dbReference>
<dbReference type="GO" id="GO:0034707">
    <property type="term" value="C:chloride channel complex"/>
    <property type="evidence" value="ECO:0007669"/>
    <property type="project" value="UniProtKB-KW"/>
</dbReference>
<dbReference type="GO" id="GO:0005886">
    <property type="term" value="C:plasma membrane"/>
    <property type="evidence" value="ECO:0007669"/>
    <property type="project" value="UniProtKB-SubCell"/>
</dbReference>
<dbReference type="GO" id="GO:0070160">
    <property type="term" value="C:tight junction"/>
    <property type="evidence" value="ECO:0000314"/>
    <property type="project" value="UniProtKB"/>
</dbReference>
<dbReference type="GO" id="GO:0005254">
    <property type="term" value="F:chloride channel activity"/>
    <property type="evidence" value="ECO:0007669"/>
    <property type="project" value="UniProtKB-KW"/>
</dbReference>
<dbReference type="GO" id="GO:0042802">
    <property type="term" value="F:identical protein binding"/>
    <property type="evidence" value="ECO:0000250"/>
    <property type="project" value="UniProtKB"/>
</dbReference>
<dbReference type="GO" id="GO:0160187">
    <property type="term" value="F:paracellular tight junction channel activity"/>
    <property type="evidence" value="ECO:0000250"/>
    <property type="project" value="UniProtKB"/>
</dbReference>
<dbReference type="GO" id="GO:0005198">
    <property type="term" value="F:structural molecule activity"/>
    <property type="evidence" value="ECO:0007669"/>
    <property type="project" value="InterPro"/>
</dbReference>
<dbReference type="GO" id="GO:0016338">
    <property type="term" value="P:calcium-independent cell-cell adhesion via plasma membrane cell-adhesion molecules"/>
    <property type="evidence" value="ECO:0000250"/>
    <property type="project" value="UniProtKB"/>
</dbReference>
<dbReference type="GO" id="GO:0160184">
    <property type="term" value="P:paracellular transport"/>
    <property type="evidence" value="ECO:0000250"/>
    <property type="project" value="UniProtKB"/>
</dbReference>
<dbReference type="FunFam" id="1.20.140.150:FF:000001">
    <property type="entry name" value="Claudin"/>
    <property type="match status" value="1"/>
</dbReference>
<dbReference type="Gene3D" id="1.20.140.150">
    <property type="match status" value="1"/>
</dbReference>
<dbReference type="InterPro" id="IPR006187">
    <property type="entry name" value="Claudin"/>
</dbReference>
<dbReference type="InterPro" id="IPR017974">
    <property type="entry name" value="Claudin_CS"/>
</dbReference>
<dbReference type="InterPro" id="IPR004031">
    <property type="entry name" value="PMP22/EMP/MP20/Claudin"/>
</dbReference>
<dbReference type="PANTHER" id="PTHR12002">
    <property type="entry name" value="CLAUDIN"/>
    <property type="match status" value="1"/>
</dbReference>
<dbReference type="Pfam" id="PF00822">
    <property type="entry name" value="PMP22_Claudin"/>
    <property type="match status" value="1"/>
</dbReference>
<dbReference type="PRINTS" id="PR01077">
    <property type="entry name" value="CLAUDIN"/>
</dbReference>
<dbReference type="PRINTS" id="PR01446">
    <property type="entry name" value="CLAUDIN8"/>
</dbReference>
<dbReference type="PROSITE" id="PS01346">
    <property type="entry name" value="CLAUDIN"/>
    <property type="match status" value="1"/>
</dbReference>